<sequence>MSLPMLQVALDNQTMDSAYETTRLIAEEVDIIEVGTILCVGEGVRAVRDLKALYPHKIVLADAKIADAGKILSRMCFEANADWVTVICCADINTAKGALDVAKEFNGDVQIELTGYWTWEQAQQWRDAGIQQVVYHRSRDAQAAGVAWGEADITAIKRLSDMGFKVTVTGGLALEDLPLFKGIPIHVFIAGRSIRDAESPVEAARQFKRSIAQLWG</sequence>
<protein>
    <recommendedName>
        <fullName evidence="1">3-keto-L-gulonate-6-phosphate decarboxylase UlaD</fullName>
        <ecNumber evidence="1">4.1.1.85</ecNumber>
    </recommendedName>
    <alternativeName>
        <fullName evidence="1">3-dehydro-L-gulonate-6-phosphate decarboxylase</fullName>
    </alternativeName>
    <alternativeName>
        <fullName evidence="1">KGPDC</fullName>
    </alternativeName>
    <alternativeName>
        <fullName evidence="1">L-ascorbate utilization protein D</fullName>
    </alternativeName>
</protein>
<reference key="1">
    <citation type="journal article" date="2011" name="J. Bacteriol.">
        <title>Comparative genomics of 28 Salmonella enterica isolates: evidence for CRISPR-mediated adaptive sublineage evolution.</title>
        <authorList>
            <person name="Fricke W.F."/>
            <person name="Mammel M.K."/>
            <person name="McDermott P.F."/>
            <person name="Tartera C."/>
            <person name="White D.G."/>
            <person name="Leclerc J.E."/>
            <person name="Ravel J."/>
            <person name="Cebula T.A."/>
        </authorList>
    </citation>
    <scope>NUCLEOTIDE SEQUENCE [LARGE SCALE GENOMIC DNA]</scope>
    <source>
        <strain>CVM19633</strain>
    </source>
</reference>
<proteinExistence type="inferred from homology"/>
<evidence type="ECO:0000255" key="1">
    <source>
        <dbReference type="HAMAP-Rule" id="MF_01267"/>
    </source>
</evidence>
<name>ULAD_SALSV</name>
<dbReference type="EC" id="4.1.1.85" evidence="1"/>
<dbReference type="EMBL" id="CP001127">
    <property type="protein sequence ID" value="ACF91457.1"/>
    <property type="molecule type" value="Genomic_DNA"/>
</dbReference>
<dbReference type="RefSeq" id="WP_000056761.1">
    <property type="nucleotide sequence ID" value="NC_011094.1"/>
</dbReference>
<dbReference type="SMR" id="B4TT28"/>
<dbReference type="KEGG" id="sew:SeSA_A4654"/>
<dbReference type="HOGENOM" id="CLU_081825_0_0_6"/>
<dbReference type="UniPathway" id="UPA00263">
    <property type="reaction ID" value="UER00378"/>
</dbReference>
<dbReference type="Proteomes" id="UP000001865">
    <property type="component" value="Chromosome"/>
</dbReference>
<dbReference type="GO" id="GO:0033982">
    <property type="term" value="F:3-dehydro-L-gulonate-6-phosphate decarboxylase activity"/>
    <property type="evidence" value="ECO:0007669"/>
    <property type="project" value="UniProtKB-EC"/>
</dbReference>
<dbReference type="GO" id="GO:0000287">
    <property type="term" value="F:magnesium ion binding"/>
    <property type="evidence" value="ECO:0007669"/>
    <property type="project" value="UniProtKB-UniRule"/>
</dbReference>
<dbReference type="GO" id="GO:0004590">
    <property type="term" value="F:orotidine-5'-phosphate decarboxylase activity"/>
    <property type="evidence" value="ECO:0007669"/>
    <property type="project" value="InterPro"/>
</dbReference>
<dbReference type="GO" id="GO:0006207">
    <property type="term" value="P:'de novo' pyrimidine nucleobase biosynthetic process"/>
    <property type="evidence" value="ECO:0007669"/>
    <property type="project" value="InterPro"/>
</dbReference>
<dbReference type="GO" id="GO:0019854">
    <property type="term" value="P:L-ascorbic acid catabolic process"/>
    <property type="evidence" value="ECO:0007669"/>
    <property type="project" value="UniProtKB-UniRule"/>
</dbReference>
<dbReference type="CDD" id="cd04726">
    <property type="entry name" value="KGPDC_HPS"/>
    <property type="match status" value="1"/>
</dbReference>
<dbReference type="FunFam" id="3.20.20.70:FF:000022">
    <property type="entry name" value="3-keto-L-gulonate-6-phosphate decarboxylase UlaD"/>
    <property type="match status" value="1"/>
</dbReference>
<dbReference type="Gene3D" id="3.20.20.70">
    <property type="entry name" value="Aldolase class I"/>
    <property type="match status" value="1"/>
</dbReference>
<dbReference type="HAMAP" id="MF_01267">
    <property type="entry name" value="UlaD"/>
    <property type="match status" value="1"/>
</dbReference>
<dbReference type="InterPro" id="IPR023942">
    <property type="entry name" value="3-keto-L-gulonate6Pdecase_UlaD"/>
</dbReference>
<dbReference type="InterPro" id="IPR013785">
    <property type="entry name" value="Aldolase_TIM"/>
</dbReference>
<dbReference type="InterPro" id="IPR041710">
    <property type="entry name" value="HPS/KGPDC"/>
</dbReference>
<dbReference type="InterPro" id="IPR001754">
    <property type="entry name" value="OMPdeCOase_dom"/>
</dbReference>
<dbReference type="InterPro" id="IPR011060">
    <property type="entry name" value="RibuloseP-bd_barrel"/>
</dbReference>
<dbReference type="NCBIfam" id="NF009832">
    <property type="entry name" value="PRK13306.1"/>
    <property type="match status" value="1"/>
</dbReference>
<dbReference type="PANTHER" id="PTHR35039">
    <property type="entry name" value="3-KETO-L-GULONATE-6-PHOSPHATE DECARBOXYLASE SGBH-RELATED"/>
    <property type="match status" value="1"/>
</dbReference>
<dbReference type="PANTHER" id="PTHR35039:SF3">
    <property type="entry name" value="3-KETO-L-GULONATE-6-PHOSPHATE DECARBOXYLASE SGBH-RELATED"/>
    <property type="match status" value="1"/>
</dbReference>
<dbReference type="Pfam" id="PF00215">
    <property type="entry name" value="OMPdecase"/>
    <property type="match status" value="1"/>
</dbReference>
<dbReference type="SMART" id="SM00934">
    <property type="entry name" value="OMPdecase"/>
    <property type="match status" value="1"/>
</dbReference>
<dbReference type="SUPFAM" id="SSF51366">
    <property type="entry name" value="Ribulose-phoshate binding barrel"/>
    <property type="match status" value="1"/>
</dbReference>
<comment type="function">
    <text evidence="1">Catalyzes the decarboxylation of 3-keto-L-gulonate-6-P into L-xylulose-5-P. Is involved in the anaerobic L-ascorbate utilization.</text>
</comment>
<comment type="catalytic activity">
    <reaction evidence="1">
        <text>3-dehydro-L-gulonate 6-phosphate + H(+) = L-xylulose 5-phosphate + CO2</text>
        <dbReference type="Rhea" id="RHEA:14353"/>
        <dbReference type="ChEBI" id="CHEBI:15378"/>
        <dbReference type="ChEBI" id="CHEBI:16526"/>
        <dbReference type="ChEBI" id="CHEBI:57829"/>
        <dbReference type="ChEBI" id="CHEBI:58774"/>
        <dbReference type="EC" id="4.1.1.85"/>
    </reaction>
</comment>
<comment type="cofactor">
    <cofactor evidence="1">
        <name>Mg(2+)</name>
        <dbReference type="ChEBI" id="CHEBI:18420"/>
    </cofactor>
    <text evidence="1">Binds 1 Mg(2+) ion per subunit.</text>
</comment>
<comment type="pathway">
    <text evidence="1">Cofactor degradation; L-ascorbate degradation; D-xylulose 5-phosphate from L-ascorbate: step 2/4.</text>
</comment>
<comment type="subunit">
    <text evidence="1">Homodimer.</text>
</comment>
<comment type="induction">
    <text evidence="1">Induced by L-ascorbate. Repressed by UlaR.</text>
</comment>
<comment type="similarity">
    <text evidence="1">Belongs to the HPS/KGPDC family. KGPDC subfamily.</text>
</comment>
<gene>
    <name evidence="1" type="primary">ulaD</name>
    <name type="ordered locus">SeSA_A4654</name>
</gene>
<feature type="chain" id="PRO_1000140125" description="3-keto-L-gulonate-6-phosphate decarboxylase UlaD">
    <location>
        <begin position="1"/>
        <end position="216"/>
    </location>
</feature>
<feature type="binding site" evidence="1">
    <location>
        <position position="11"/>
    </location>
    <ligand>
        <name>substrate</name>
    </ligand>
</feature>
<feature type="binding site" evidence="1">
    <location>
        <position position="33"/>
    </location>
    <ligand>
        <name>Mg(2+)</name>
        <dbReference type="ChEBI" id="CHEBI:18420"/>
    </ligand>
</feature>
<feature type="binding site" evidence="1">
    <location>
        <position position="62"/>
    </location>
    <ligand>
        <name>Mg(2+)</name>
        <dbReference type="ChEBI" id="CHEBI:18420"/>
    </ligand>
</feature>
<feature type="binding site" evidence="1">
    <location>
        <position position="192"/>
    </location>
    <ligand>
        <name>substrate</name>
    </ligand>
</feature>
<feature type="site" description="Transition state stabilizer" evidence="1">
    <location>
        <position position="64"/>
    </location>
</feature>
<feature type="site" description="Transition state stabilizer" evidence="1">
    <location>
        <position position="67"/>
    </location>
</feature>
<accession>B4TT28</accession>
<keyword id="KW-0119">Carbohydrate metabolism</keyword>
<keyword id="KW-0210">Decarboxylase</keyword>
<keyword id="KW-0456">Lyase</keyword>
<keyword id="KW-0460">Magnesium</keyword>
<keyword id="KW-0479">Metal-binding</keyword>
<organism>
    <name type="scientific">Salmonella schwarzengrund (strain CVM19633)</name>
    <dbReference type="NCBI Taxonomy" id="439843"/>
    <lineage>
        <taxon>Bacteria</taxon>
        <taxon>Pseudomonadati</taxon>
        <taxon>Pseudomonadota</taxon>
        <taxon>Gammaproteobacteria</taxon>
        <taxon>Enterobacterales</taxon>
        <taxon>Enterobacteriaceae</taxon>
        <taxon>Salmonella</taxon>
    </lineage>
</organism>